<proteinExistence type="inferred from homology"/>
<evidence type="ECO:0000255" key="1">
    <source>
        <dbReference type="HAMAP-Rule" id="MF_00238"/>
    </source>
</evidence>
<feature type="chain" id="PRO_1000048221" description="Cytidylate kinase">
    <location>
        <begin position="1"/>
        <end position="224"/>
    </location>
</feature>
<feature type="binding site" evidence="1">
    <location>
        <begin position="11"/>
        <end position="19"/>
    </location>
    <ligand>
        <name>ATP</name>
        <dbReference type="ChEBI" id="CHEBI:30616"/>
    </ligand>
</feature>
<organism>
    <name type="scientific">Geobacillus kaustophilus (strain HTA426)</name>
    <dbReference type="NCBI Taxonomy" id="235909"/>
    <lineage>
        <taxon>Bacteria</taxon>
        <taxon>Bacillati</taxon>
        <taxon>Bacillota</taxon>
        <taxon>Bacilli</taxon>
        <taxon>Bacillales</taxon>
        <taxon>Anoxybacillaceae</taxon>
        <taxon>Geobacillus</taxon>
        <taxon>Geobacillus thermoleovorans group</taxon>
    </lineage>
</organism>
<sequence length="224" mass="24768">MKRRISIAIDGPAAAGKSTVAKRIAERLSYVYIDTGAMYRALTYRALACGVDIHDEQALLSLLRDTSIELKPSPHGQIVLVNGDDVTDIIRGEAVTNAVSLVAKHPLVREEMVARQRALAEGGGVVMDGRDIGTHVLPNAEVKIFLKASVEERARRRHEENLARGFPSDLEKLKEEIARRDRLDSERETAPLRKAPDAVEIDTTSLSVEEVVERIMEIVNERIG</sequence>
<comment type="catalytic activity">
    <reaction evidence="1">
        <text>CMP + ATP = CDP + ADP</text>
        <dbReference type="Rhea" id="RHEA:11600"/>
        <dbReference type="ChEBI" id="CHEBI:30616"/>
        <dbReference type="ChEBI" id="CHEBI:58069"/>
        <dbReference type="ChEBI" id="CHEBI:60377"/>
        <dbReference type="ChEBI" id="CHEBI:456216"/>
        <dbReference type="EC" id="2.7.4.25"/>
    </reaction>
</comment>
<comment type="catalytic activity">
    <reaction evidence="1">
        <text>dCMP + ATP = dCDP + ADP</text>
        <dbReference type="Rhea" id="RHEA:25094"/>
        <dbReference type="ChEBI" id="CHEBI:30616"/>
        <dbReference type="ChEBI" id="CHEBI:57566"/>
        <dbReference type="ChEBI" id="CHEBI:58593"/>
        <dbReference type="ChEBI" id="CHEBI:456216"/>
        <dbReference type="EC" id="2.7.4.25"/>
    </reaction>
</comment>
<comment type="subcellular location">
    <subcellularLocation>
        <location evidence="1">Cytoplasm</location>
    </subcellularLocation>
</comment>
<comment type="similarity">
    <text evidence="1">Belongs to the cytidylate kinase family. Type 1 subfamily.</text>
</comment>
<name>KCY_GEOKA</name>
<protein>
    <recommendedName>
        <fullName evidence="1">Cytidylate kinase</fullName>
        <shortName evidence="1">CK</shortName>
        <ecNumber evidence="1">2.7.4.25</ecNumber>
    </recommendedName>
    <alternativeName>
        <fullName evidence="1">Cytidine monophosphate kinase</fullName>
        <shortName evidence="1">CMP kinase</shortName>
    </alternativeName>
</protein>
<keyword id="KW-0067">ATP-binding</keyword>
<keyword id="KW-0963">Cytoplasm</keyword>
<keyword id="KW-0418">Kinase</keyword>
<keyword id="KW-0547">Nucleotide-binding</keyword>
<keyword id="KW-1185">Reference proteome</keyword>
<keyword id="KW-0808">Transferase</keyword>
<reference key="1">
    <citation type="journal article" date="2004" name="Nucleic Acids Res.">
        <title>Thermoadaptation trait revealed by the genome sequence of thermophilic Geobacillus kaustophilus.</title>
        <authorList>
            <person name="Takami H."/>
            <person name="Takaki Y."/>
            <person name="Chee G.-J."/>
            <person name="Nishi S."/>
            <person name="Shimamura S."/>
            <person name="Suzuki H."/>
            <person name="Matsui S."/>
            <person name="Uchiyama I."/>
        </authorList>
    </citation>
    <scope>NUCLEOTIDE SEQUENCE [LARGE SCALE GENOMIC DNA]</scope>
    <source>
        <strain>HTA426</strain>
    </source>
</reference>
<dbReference type="EC" id="2.7.4.25" evidence="1"/>
<dbReference type="EMBL" id="BA000043">
    <property type="protein sequence ID" value="BAD76512.1"/>
    <property type="molecule type" value="Genomic_DNA"/>
</dbReference>
<dbReference type="RefSeq" id="WP_011231711.1">
    <property type="nucleotide sequence ID" value="NC_006510.1"/>
</dbReference>
<dbReference type="SMR" id="Q5KXS4"/>
<dbReference type="STRING" id="235909.GK2227"/>
<dbReference type="GeneID" id="32064079"/>
<dbReference type="KEGG" id="gka:GK2227"/>
<dbReference type="eggNOG" id="COG0283">
    <property type="taxonomic scope" value="Bacteria"/>
</dbReference>
<dbReference type="HOGENOM" id="CLU_079959_0_2_9"/>
<dbReference type="Proteomes" id="UP000001172">
    <property type="component" value="Chromosome"/>
</dbReference>
<dbReference type="GO" id="GO:0005829">
    <property type="term" value="C:cytosol"/>
    <property type="evidence" value="ECO:0007669"/>
    <property type="project" value="TreeGrafter"/>
</dbReference>
<dbReference type="GO" id="GO:0005524">
    <property type="term" value="F:ATP binding"/>
    <property type="evidence" value="ECO:0007669"/>
    <property type="project" value="UniProtKB-UniRule"/>
</dbReference>
<dbReference type="GO" id="GO:0036430">
    <property type="term" value="F:CMP kinase activity"/>
    <property type="evidence" value="ECO:0007669"/>
    <property type="project" value="RHEA"/>
</dbReference>
<dbReference type="GO" id="GO:0036431">
    <property type="term" value="F:dCMP kinase activity"/>
    <property type="evidence" value="ECO:0007669"/>
    <property type="project" value="RHEA"/>
</dbReference>
<dbReference type="GO" id="GO:0015949">
    <property type="term" value="P:nucleobase-containing small molecule interconversion"/>
    <property type="evidence" value="ECO:0007669"/>
    <property type="project" value="TreeGrafter"/>
</dbReference>
<dbReference type="GO" id="GO:0006220">
    <property type="term" value="P:pyrimidine nucleotide metabolic process"/>
    <property type="evidence" value="ECO:0007669"/>
    <property type="project" value="UniProtKB-UniRule"/>
</dbReference>
<dbReference type="CDD" id="cd02020">
    <property type="entry name" value="CMPK"/>
    <property type="match status" value="1"/>
</dbReference>
<dbReference type="FunFam" id="3.40.50.300:FF:000484">
    <property type="entry name" value="Cytidylate kinase"/>
    <property type="match status" value="1"/>
</dbReference>
<dbReference type="Gene3D" id="3.40.50.300">
    <property type="entry name" value="P-loop containing nucleotide triphosphate hydrolases"/>
    <property type="match status" value="1"/>
</dbReference>
<dbReference type="HAMAP" id="MF_00238">
    <property type="entry name" value="Cytidyl_kinase_type1"/>
    <property type="match status" value="1"/>
</dbReference>
<dbReference type="InterPro" id="IPR003136">
    <property type="entry name" value="Cytidylate_kin"/>
</dbReference>
<dbReference type="InterPro" id="IPR011994">
    <property type="entry name" value="Cytidylate_kinase_dom"/>
</dbReference>
<dbReference type="InterPro" id="IPR027417">
    <property type="entry name" value="P-loop_NTPase"/>
</dbReference>
<dbReference type="NCBIfam" id="TIGR00017">
    <property type="entry name" value="cmk"/>
    <property type="match status" value="1"/>
</dbReference>
<dbReference type="PANTHER" id="PTHR21299:SF2">
    <property type="entry name" value="CYTIDYLATE KINASE"/>
    <property type="match status" value="1"/>
</dbReference>
<dbReference type="PANTHER" id="PTHR21299">
    <property type="entry name" value="CYTIDYLATE KINASE/PANTOATE-BETA-ALANINE LIGASE"/>
    <property type="match status" value="1"/>
</dbReference>
<dbReference type="Pfam" id="PF02224">
    <property type="entry name" value="Cytidylate_kin"/>
    <property type="match status" value="1"/>
</dbReference>
<dbReference type="SUPFAM" id="SSF52540">
    <property type="entry name" value="P-loop containing nucleoside triphosphate hydrolases"/>
    <property type="match status" value="1"/>
</dbReference>
<accession>Q5KXS4</accession>
<gene>
    <name evidence="1" type="primary">cmk</name>
    <name type="ordered locus">GK2227</name>
</gene>